<protein>
    <recommendedName>
        <fullName evidence="2">Putative endoplasmic reticulum metallopeptidase 1-B</fullName>
        <ecNumber evidence="7">3.4.-.-</ecNumber>
    </recommendedName>
    <alternativeName>
        <fullName evidence="7">FXNA-like protease</fullName>
    </alternativeName>
</protein>
<reference key="1">
    <citation type="journal article" date="1998" name="Science">
        <title>Genome sequence of the nematode C. elegans: a platform for investigating biology.</title>
        <authorList>
            <consortium name="The C. elegans sequencing consortium"/>
        </authorList>
    </citation>
    <scope>NUCLEOTIDE SEQUENCE [LARGE SCALE GENOMIC DNA]</scope>
    <source>
        <strain>Bristol N2</strain>
    </source>
</reference>
<reference key="2">
    <citation type="journal article" date="2007" name="Mol. Cell. Proteomics">
        <title>Proteomics reveals N-linked glycoprotein diversity in Caenorhabditis elegans and suggests an atypical translocation mechanism for integral membrane proteins.</title>
        <authorList>
            <person name="Kaji H."/>
            <person name="Kamiie J."/>
            <person name="Kawakami H."/>
            <person name="Kido K."/>
            <person name="Yamauchi Y."/>
            <person name="Shinkawa T."/>
            <person name="Taoka M."/>
            <person name="Takahashi N."/>
            <person name="Isobe T."/>
        </authorList>
    </citation>
    <scope>GLYCOSYLATION [LARGE SCALE ANALYSIS] AT ASN-679</scope>
    <scope>IDENTIFICATION BY MASS SPECTROMETRY</scope>
    <source>
        <strain>Bristol N2</strain>
    </source>
</reference>
<keyword id="KW-0175">Coiled coil</keyword>
<keyword id="KW-0256">Endoplasmic reticulum</keyword>
<keyword id="KW-0325">Glycoprotein</keyword>
<keyword id="KW-0378">Hydrolase</keyword>
<keyword id="KW-0472">Membrane</keyword>
<keyword id="KW-0479">Metal-binding</keyword>
<keyword id="KW-0482">Metalloprotease</keyword>
<keyword id="KW-0645">Protease</keyword>
<keyword id="KW-1185">Reference proteome</keyword>
<keyword id="KW-0812">Transmembrane</keyword>
<keyword id="KW-1133">Transmembrane helix</keyword>
<keyword id="KW-0862">Zinc</keyword>
<proteinExistence type="evidence at protein level"/>
<evidence type="ECO:0000250" key="1">
    <source>
        <dbReference type="UniProtKB" id="P80561"/>
    </source>
</evidence>
<evidence type="ECO:0000250" key="2">
    <source>
        <dbReference type="UniProtKB" id="Q6UPR8"/>
    </source>
</evidence>
<evidence type="ECO:0000255" key="3"/>
<evidence type="ECO:0000255" key="4">
    <source>
        <dbReference type="PROSITE-ProRule" id="PRU00498"/>
    </source>
</evidence>
<evidence type="ECO:0000256" key="5">
    <source>
        <dbReference type="SAM" id="MobiDB-lite"/>
    </source>
</evidence>
<evidence type="ECO:0000269" key="6">
    <source>
    </source>
</evidence>
<evidence type="ECO:0000305" key="7"/>
<feature type="chain" id="PRO_0000174142" description="Putative endoplasmic reticulum metallopeptidase 1-B">
    <location>
        <begin position="1"/>
        <end position="895"/>
    </location>
</feature>
<feature type="topological domain" description="Cytoplasmic" evidence="7">
    <location>
        <begin position="1"/>
        <end position="39"/>
    </location>
</feature>
<feature type="transmembrane region" description="Helical; Name=1" evidence="3">
    <location>
        <begin position="40"/>
        <end position="60"/>
    </location>
</feature>
<feature type="topological domain" description="Lumenal" evidence="7">
    <location>
        <begin position="61"/>
        <end position="374"/>
    </location>
</feature>
<feature type="transmembrane region" description="Helical; Name=2" evidence="3">
    <location>
        <begin position="375"/>
        <end position="395"/>
    </location>
</feature>
<feature type="topological domain" description="Cytoplasmic" evidence="7">
    <location>
        <begin position="396"/>
        <end position="424"/>
    </location>
</feature>
<feature type="transmembrane region" description="Helical; Name=3" evidence="3">
    <location>
        <begin position="425"/>
        <end position="445"/>
    </location>
</feature>
<feature type="topological domain" description="Lumenal" evidence="7">
    <location>
        <begin position="446"/>
        <end position="457"/>
    </location>
</feature>
<feature type="transmembrane region" description="Helical; Name=4" evidence="3">
    <location>
        <begin position="458"/>
        <end position="478"/>
    </location>
</feature>
<feature type="topological domain" description="Cytoplasmic" evidence="7">
    <location>
        <begin position="479"/>
        <end position="489"/>
    </location>
</feature>
<feature type="transmembrane region" description="Helical; Name=5" evidence="3">
    <location>
        <begin position="490"/>
        <end position="512"/>
    </location>
</feature>
<feature type="topological domain" description="Lumenal" evidence="7">
    <location>
        <begin position="513"/>
        <end position="515"/>
    </location>
</feature>
<feature type="transmembrane region" description="Helical; Name=6" evidence="3">
    <location>
        <begin position="516"/>
        <end position="538"/>
    </location>
</feature>
<feature type="topological domain" description="Cytoplasmic" evidence="7">
    <location>
        <begin position="539"/>
        <end position="553"/>
    </location>
</feature>
<feature type="transmembrane region" description="Helical; Name=7" evidence="3">
    <location>
        <begin position="554"/>
        <end position="574"/>
    </location>
</feature>
<feature type="topological domain" description="Lumenal" evidence="7">
    <location>
        <begin position="575"/>
        <end position="584"/>
    </location>
</feature>
<feature type="transmembrane region" description="Helical; Name=8" evidence="3">
    <location>
        <begin position="585"/>
        <end position="605"/>
    </location>
</feature>
<feature type="topological domain" description="Cytoplasmic" evidence="7">
    <location>
        <begin position="606"/>
        <end position="619"/>
    </location>
</feature>
<feature type="transmembrane region" description="Helical; Name=9" evidence="3">
    <location>
        <begin position="620"/>
        <end position="640"/>
    </location>
</feature>
<feature type="topological domain" description="Lumenal" evidence="7">
    <location>
        <begin position="641"/>
        <end position="895"/>
    </location>
</feature>
<feature type="region of interest" description="Disordered" evidence="5">
    <location>
        <begin position="1"/>
        <end position="27"/>
    </location>
</feature>
<feature type="compositionally biased region" description="Basic and acidic residues" evidence="5">
    <location>
        <begin position="9"/>
        <end position="27"/>
    </location>
</feature>
<feature type="active site" description="Proton acceptor" evidence="1">
    <location>
        <position position="226"/>
    </location>
</feature>
<feature type="binding site" evidence="1">
    <location>
        <position position="180"/>
    </location>
    <ligand>
        <name>Zn(2+)</name>
        <dbReference type="ChEBI" id="CHEBI:29105"/>
        <label>1</label>
        <note>catalytic</note>
    </ligand>
</feature>
<feature type="binding site" evidence="1">
    <location>
        <position position="192"/>
    </location>
    <ligand>
        <name>Zn(2+)</name>
        <dbReference type="ChEBI" id="CHEBI:29105"/>
        <label>1</label>
        <note>catalytic</note>
    </ligand>
</feature>
<feature type="binding site" evidence="1">
    <location>
        <position position="192"/>
    </location>
    <ligand>
        <name>Zn(2+)</name>
        <dbReference type="ChEBI" id="CHEBI:29105"/>
        <label>2</label>
        <note>catalytic</note>
    </ligand>
</feature>
<feature type="binding site" evidence="1">
    <location>
        <position position="227"/>
    </location>
    <ligand>
        <name>Zn(2+)</name>
        <dbReference type="ChEBI" id="CHEBI:29105"/>
        <label>2</label>
        <note>catalytic</note>
    </ligand>
</feature>
<feature type="binding site" evidence="1">
    <location>
        <position position="253"/>
    </location>
    <ligand>
        <name>Zn(2+)</name>
        <dbReference type="ChEBI" id="CHEBI:29105"/>
        <label>1</label>
        <note>catalytic</note>
    </ligand>
</feature>
<feature type="binding site" evidence="1">
    <location>
        <position position="329"/>
    </location>
    <ligand>
        <name>Zn(2+)</name>
        <dbReference type="ChEBI" id="CHEBI:29105"/>
        <label>2</label>
        <note>catalytic</note>
    </ligand>
</feature>
<feature type="glycosylation site" description="N-linked (GlcNAc...) asparagine" evidence="4">
    <location>
        <position position="156"/>
    </location>
</feature>
<feature type="glycosylation site" description="N-linked (GlcNAc...) asparagine" evidence="6">
    <location>
        <position position="679"/>
    </location>
</feature>
<feature type="glycosylation site" description="N-linked (GlcNAc...) asparagine" evidence="4">
    <location>
        <position position="796"/>
    </location>
</feature>
<name>ERP1B_CAEEL</name>
<dbReference type="EC" id="3.4.-.-" evidence="7"/>
<dbReference type="EMBL" id="FO080141">
    <property type="protein sequence ID" value="CCD61567.1"/>
    <property type="molecule type" value="Genomic_DNA"/>
</dbReference>
<dbReference type="PIR" id="T15804">
    <property type="entry name" value="T15804"/>
</dbReference>
<dbReference type="RefSeq" id="NP_495410.4">
    <property type="nucleotide sequence ID" value="NM_063009.8"/>
</dbReference>
<dbReference type="SMR" id="Q18600"/>
<dbReference type="FunCoup" id="Q18600">
    <property type="interactions" value="164"/>
</dbReference>
<dbReference type="MEROPS" id="M28.018"/>
<dbReference type="MEROPS" id="M28.A20"/>
<dbReference type="iPTMnet" id="Q18600"/>
<dbReference type="PaxDb" id="6239-C44B7.11"/>
<dbReference type="PeptideAtlas" id="Q18600"/>
<dbReference type="EnsemblMetazoa" id="C44B7.11.1">
    <property type="protein sequence ID" value="C44B7.11.1"/>
    <property type="gene ID" value="WBGene00016631"/>
</dbReference>
<dbReference type="GeneID" id="183431"/>
<dbReference type="KEGG" id="cel:CELE_C44B7.11"/>
<dbReference type="UCSC" id="C44B7.11">
    <property type="organism name" value="c. elegans"/>
</dbReference>
<dbReference type="AGR" id="WB:WBGene00016631"/>
<dbReference type="CTD" id="183431"/>
<dbReference type="WormBase" id="C44B7.11">
    <property type="protein sequence ID" value="CE41617"/>
    <property type="gene ID" value="WBGene00016631"/>
</dbReference>
<dbReference type="eggNOG" id="KOG2194">
    <property type="taxonomic scope" value="Eukaryota"/>
</dbReference>
<dbReference type="HOGENOM" id="CLU_007536_2_0_1"/>
<dbReference type="InParanoid" id="Q18600"/>
<dbReference type="OMA" id="HAEGHNI"/>
<dbReference type="OrthoDB" id="7887808at2759"/>
<dbReference type="PhylomeDB" id="Q18600"/>
<dbReference type="PRO" id="PR:Q18600"/>
<dbReference type="Proteomes" id="UP000001940">
    <property type="component" value="Chromosome II"/>
</dbReference>
<dbReference type="Bgee" id="WBGene00016631">
    <property type="expression patterns" value="Expressed in larva and 3 other cell types or tissues"/>
</dbReference>
<dbReference type="GO" id="GO:0005789">
    <property type="term" value="C:endoplasmic reticulum membrane"/>
    <property type="evidence" value="ECO:0007669"/>
    <property type="project" value="UniProtKB-SubCell"/>
</dbReference>
<dbReference type="GO" id="GO:0046872">
    <property type="term" value="F:metal ion binding"/>
    <property type="evidence" value="ECO:0007669"/>
    <property type="project" value="UniProtKB-KW"/>
</dbReference>
<dbReference type="GO" id="GO:0008235">
    <property type="term" value="F:metalloexopeptidase activity"/>
    <property type="evidence" value="ECO:0007669"/>
    <property type="project" value="InterPro"/>
</dbReference>
<dbReference type="GO" id="GO:0006508">
    <property type="term" value="P:proteolysis"/>
    <property type="evidence" value="ECO:0000318"/>
    <property type="project" value="GO_Central"/>
</dbReference>
<dbReference type="CDD" id="cd03875">
    <property type="entry name" value="M28_Fxna_like"/>
    <property type="match status" value="1"/>
</dbReference>
<dbReference type="FunFam" id="3.40.630.10:FF:000008">
    <property type="entry name" value="Endoplasmic reticulum metallopeptidase 1"/>
    <property type="match status" value="1"/>
</dbReference>
<dbReference type="Gene3D" id="3.40.630.10">
    <property type="entry name" value="Zn peptidases"/>
    <property type="match status" value="1"/>
</dbReference>
<dbReference type="InterPro" id="IPR053973">
    <property type="entry name" value="ERMP1-like_C"/>
</dbReference>
<dbReference type="InterPro" id="IPR048024">
    <property type="entry name" value="Fxna-like_M28_dom"/>
</dbReference>
<dbReference type="InterPro" id="IPR045175">
    <property type="entry name" value="M28_fam"/>
</dbReference>
<dbReference type="InterPro" id="IPR007484">
    <property type="entry name" value="Peptidase_M28"/>
</dbReference>
<dbReference type="PANTHER" id="PTHR12147:SF11">
    <property type="entry name" value="ENDOPLASMIC RETICULUM METALLOPEPTIDASE 1-B-RELATED"/>
    <property type="match status" value="1"/>
</dbReference>
<dbReference type="PANTHER" id="PTHR12147">
    <property type="entry name" value="METALLOPEPTIDASE M28 FAMILY MEMBER"/>
    <property type="match status" value="1"/>
</dbReference>
<dbReference type="Pfam" id="PF22248">
    <property type="entry name" value="ERMP1_C"/>
    <property type="match status" value="1"/>
</dbReference>
<dbReference type="Pfam" id="PF04389">
    <property type="entry name" value="Peptidase_M28"/>
    <property type="match status" value="1"/>
</dbReference>
<dbReference type="SUPFAM" id="SSF53187">
    <property type="entry name" value="Zn-dependent exopeptidases"/>
    <property type="match status" value="1"/>
</dbReference>
<gene>
    <name type="ORF">C44B7.11</name>
</gene>
<comment type="cofactor">
    <cofactor evidence="1">
        <name>Zn(2+)</name>
        <dbReference type="ChEBI" id="CHEBI:29105"/>
    </cofactor>
    <text evidence="1">Binds 2 Zn(2+) ions per subunit.</text>
</comment>
<comment type="subcellular location">
    <subcellularLocation>
        <location evidence="2">Endoplasmic reticulum membrane</location>
        <topology evidence="3">Multi-pass membrane protein</topology>
    </subcellularLocation>
</comment>
<comment type="similarity">
    <text evidence="7">Belongs to the peptidase M28 family.</text>
</comment>
<sequence length="895" mass="101896">MSTGIRRRHADEKKNILEKESLQNDETQREMEKDISLLRPAHWNFIGLFFLVLIIGTTFLHKCLPEPKDPNQEETQFSEKRAVKVLQELSDYGWKPAGSYNCEELTRNRILKELNDIRSQNQNVENLRFDIDTQYVSGCFDIPAHDTEGMNICYRNVSNVMARLGKGEKKDKISVLLNCHYDSWPTSNAGSDDLSSCALMLELIRLYSKNPHLLNHDVIFLFNGAEESSLLAAHGFITQHSWRHEIRAFINLEASGSGGRELLFQAGPANQWLLNSYLEAAIHPHCSVIGQEVFQSGVYPGDTDFRIFRDHGRVPGLDLAFVQNGYWWHTEFDTAERITKGSLQRAGENVYSTLNHLLKSPYLEKPAEYADRKTVFFDFLGLFVIIYPLSIAHLVNMLTICTVIALMSHRFYSKTFITFLALRDYVLTILTIALVLKAMTFMSLFTYGALRWYTRHWLALVAYGLPSVWAGISVQGLLTARLAPKAREEYGSTLELIHLTLISGILLAFTYYDIASGFLFALLLVPAIKSIITYFGAWPTCPTFNTILTLILSFPGCAMAIYTTEMLLSIFIPIMGRSSYNPEPAVSFFVAFSAGCIVLSLGGLVAKSRNSRSSNEAGLLELIYNILGVLLVTLTILYVFSSFWPSPYRFDNVYPTAKRTQFFHVNQMLYDRNGQISVNDTRFYAISHDYRGAEDIPFVKKDPEYTGLQCHYENNPWCETPFLFPTKGRLNERNIRVRSVDERLKFKHPVKILGISKRHGVDSKDGKGNIEYSFSVIGTGQISVYIIPDTTWLITNTSVTQPKTPQENMFLYYTCSTPNNICEWMFKVTIKKTTQTPSDDKPLLIGISSHYLHGPEMQSESIKNMIAKIQENRVNSPEWTVTASAWNVDQVYKYF</sequence>
<organism>
    <name type="scientific">Caenorhabditis elegans</name>
    <dbReference type="NCBI Taxonomy" id="6239"/>
    <lineage>
        <taxon>Eukaryota</taxon>
        <taxon>Metazoa</taxon>
        <taxon>Ecdysozoa</taxon>
        <taxon>Nematoda</taxon>
        <taxon>Chromadorea</taxon>
        <taxon>Rhabditida</taxon>
        <taxon>Rhabditina</taxon>
        <taxon>Rhabditomorpha</taxon>
        <taxon>Rhabditoidea</taxon>
        <taxon>Rhabditidae</taxon>
        <taxon>Peloderinae</taxon>
        <taxon>Caenorhabditis</taxon>
    </lineage>
</organism>
<accession>Q18600</accession>